<dbReference type="EMBL" id="U00089">
    <property type="protein sequence ID" value="AAB95908.1"/>
    <property type="molecule type" value="Genomic_DNA"/>
</dbReference>
<dbReference type="PIR" id="S73586">
    <property type="entry name" value="S73586"/>
</dbReference>
<dbReference type="RefSeq" id="NP_110271.1">
    <property type="nucleotide sequence ID" value="NC_000912.1"/>
</dbReference>
<dbReference type="RefSeq" id="WP_010874939.1">
    <property type="nucleotide sequence ID" value="NC_000912.1"/>
</dbReference>
<dbReference type="IntAct" id="P75198">
    <property type="interactions" value="1"/>
</dbReference>
<dbReference type="STRING" id="272634.MPN_582"/>
<dbReference type="EnsemblBacteria" id="AAB95908">
    <property type="protein sequence ID" value="AAB95908"/>
    <property type="gene ID" value="MPN_582"/>
</dbReference>
<dbReference type="KEGG" id="mpn:MPN_582"/>
<dbReference type="PATRIC" id="fig|272634.6.peg.643"/>
<dbReference type="HOGENOM" id="CLU_038569_1_0_14"/>
<dbReference type="OrthoDB" id="395427at2"/>
<dbReference type="BioCyc" id="MPNE272634:G1GJ3-950-MONOMER"/>
<dbReference type="Proteomes" id="UP000000808">
    <property type="component" value="Chromosome"/>
</dbReference>
<dbReference type="GO" id="GO:0005886">
    <property type="term" value="C:plasma membrane"/>
    <property type="evidence" value="ECO:0007669"/>
    <property type="project" value="UniProtKB-SubCell"/>
</dbReference>
<dbReference type="InterPro" id="IPR022382">
    <property type="entry name" value="Mycoplasma_peptidase_DUF31"/>
</dbReference>
<dbReference type="InterPro" id="IPR009003">
    <property type="entry name" value="Peptidase_S1_PA"/>
</dbReference>
<dbReference type="InterPro" id="IPR022381">
    <property type="entry name" value="Uncharacterised_MG067"/>
</dbReference>
<dbReference type="Pfam" id="PF01732">
    <property type="entry name" value="Mycop_pep_DUF31"/>
    <property type="match status" value="1"/>
</dbReference>
<dbReference type="PRINTS" id="PR00840">
    <property type="entry name" value="Y06768FAMILY"/>
</dbReference>
<dbReference type="SUPFAM" id="SSF50494">
    <property type="entry name" value="Trypsin-like serine proteases"/>
    <property type="match status" value="1"/>
</dbReference>
<dbReference type="PROSITE" id="PS51257">
    <property type="entry name" value="PROKAR_LIPOPROTEIN"/>
    <property type="match status" value="1"/>
</dbReference>
<sequence length="439" mass="50357">MWVALKRFGFLSGLLALTVLSACSAFRKPDKFEGYYINNIPGSAEIDHANYDLTFFLGFFNRIEKTEKDKSQIDFGSIHGTGWLIDWKEVDKKDKKANKFTVYLATNLHVIQALKNREDHPPYNQFDINFVRTVDFRIGKYTDVKQFVAPSKLGLPNSTQAFVAAQPTVLPKTAFIAHDFVNYTLSKDQKNKKQREQQWKVQIKPNKDEVHPYADSAVLELPLFLNNSSDRQIFDHFIQPAIRAYKQLGDSLNIFAYPTLDQFKHSHYYVLGYPYIAKKLPTLFVNQTGKEKTVPGETAQIPNDQPFVSTINEEGPHLGRIKSDKFNGGTWAWNHDNTKNFPFNRQFRGKEYQMYGKGIGITNGSLSRGASGSLVLNNKRQIVAIYFASRITETQEWGLAQLLRWKPRSVLNEEKDSVAYDLIFGNSNTKKYYAQFAKK</sequence>
<evidence type="ECO:0000255" key="1">
    <source>
        <dbReference type="PROSITE-ProRule" id="PRU00303"/>
    </source>
</evidence>
<evidence type="ECO:0000305" key="2"/>
<name>Y582_MYCPN</name>
<keyword id="KW-1003">Cell membrane</keyword>
<keyword id="KW-0449">Lipoprotein</keyword>
<keyword id="KW-0472">Membrane</keyword>
<keyword id="KW-0564">Palmitate</keyword>
<keyword id="KW-1185">Reference proteome</keyword>
<keyword id="KW-0732">Signal</keyword>
<accession>P75198</accession>
<proteinExistence type="inferred from homology"/>
<comment type="subcellular location">
    <subcellularLocation>
        <location evidence="1">Cell membrane</location>
        <topology evidence="1">Lipid-anchor</topology>
    </subcellularLocation>
</comment>
<comment type="similarity">
    <text evidence="2">Belongs to the MG067/MG068/MG395 family.</text>
</comment>
<protein>
    <recommendedName>
        <fullName>Uncharacterized lipoprotein MPN_582</fullName>
    </recommendedName>
</protein>
<organism>
    <name type="scientific">Mycoplasma pneumoniae (strain ATCC 29342 / M129 / Subtype 1)</name>
    <name type="common">Mycoplasmoides pneumoniae</name>
    <dbReference type="NCBI Taxonomy" id="272634"/>
    <lineage>
        <taxon>Bacteria</taxon>
        <taxon>Bacillati</taxon>
        <taxon>Mycoplasmatota</taxon>
        <taxon>Mycoplasmoidales</taxon>
        <taxon>Mycoplasmoidaceae</taxon>
        <taxon>Mycoplasmoides</taxon>
    </lineage>
</organism>
<feature type="signal peptide" evidence="1">
    <location>
        <begin position="1"/>
        <end position="22"/>
    </location>
</feature>
<feature type="chain" id="PRO_0000018740" description="Uncharacterized lipoprotein MPN_582">
    <location>
        <begin position="23"/>
        <end position="439"/>
    </location>
</feature>
<feature type="lipid moiety-binding region" description="N-palmitoyl cysteine" evidence="1">
    <location>
        <position position="23"/>
    </location>
</feature>
<feature type="lipid moiety-binding region" description="S-diacylglycerol cysteine" evidence="1">
    <location>
        <position position="23"/>
    </location>
</feature>
<reference key="1">
    <citation type="journal article" date="1996" name="Nucleic Acids Res.">
        <title>Complete sequence analysis of the genome of the bacterium Mycoplasma pneumoniae.</title>
        <authorList>
            <person name="Himmelreich R."/>
            <person name="Hilbert H."/>
            <person name="Plagens H."/>
            <person name="Pirkl E."/>
            <person name="Li B.-C."/>
            <person name="Herrmann R."/>
        </authorList>
    </citation>
    <scope>NUCLEOTIDE SEQUENCE [LARGE SCALE GENOMIC DNA]</scope>
    <source>
        <strain>ATCC 29342 / M129 / Subtype 1</strain>
    </source>
</reference>
<gene>
    <name type="ordered locus">MPN_582</name>
    <name type="ORF">D02_orf439</name>
    <name type="ORF">MP260</name>
</gene>